<evidence type="ECO:0000250" key="1"/>
<evidence type="ECO:0000255" key="2"/>
<evidence type="ECO:0000305" key="3"/>
<protein>
    <recommendedName>
        <fullName>Protein HflC</fullName>
    </recommendedName>
</protein>
<gene>
    <name type="primary">hflC</name>
    <name type="ordered locus">bbp_512</name>
</gene>
<name>HFLC_BUCBP</name>
<comment type="function">
    <text evidence="1">HflC and HflK could regulate a protease.</text>
</comment>
<comment type="subunit">
    <text evidence="1">HflC and HflK may interact to form a multimeric complex.</text>
</comment>
<comment type="subcellular location">
    <subcellularLocation>
        <location evidence="3">Membrane</location>
        <topology evidence="3">Single-pass membrane protein</topology>
    </subcellularLocation>
</comment>
<comment type="similarity">
    <text evidence="3">Belongs to the band 7/mec-2 family. HflC subfamily.</text>
</comment>
<dbReference type="EMBL" id="AE016826">
    <property type="protein sequence ID" value="AAO27215.1"/>
    <property type="molecule type" value="Genomic_DNA"/>
</dbReference>
<dbReference type="RefSeq" id="WP_011091616.1">
    <property type="nucleotide sequence ID" value="NC_004545.1"/>
</dbReference>
<dbReference type="SMR" id="Q89A40"/>
<dbReference type="STRING" id="224915.bbp_512"/>
<dbReference type="KEGG" id="bab:bbp_512"/>
<dbReference type="eggNOG" id="COG0330">
    <property type="taxonomic scope" value="Bacteria"/>
</dbReference>
<dbReference type="HOGENOM" id="CLU_059167_3_0_6"/>
<dbReference type="OrthoDB" id="9812991at2"/>
<dbReference type="Proteomes" id="UP000000601">
    <property type="component" value="Chromosome"/>
</dbReference>
<dbReference type="GO" id="GO:0016020">
    <property type="term" value="C:membrane"/>
    <property type="evidence" value="ECO:0007669"/>
    <property type="project" value="UniProtKB-SubCell"/>
</dbReference>
<dbReference type="CDD" id="cd03405">
    <property type="entry name" value="SPFH_HflC"/>
    <property type="match status" value="1"/>
</dbReference>
<dbReference type="Gene3D" id="3.30.479.30">
    <property type="entry name" value="Band 7 domain"/>
    <property type="match status" value="1"/>
</dbReference>
<dbReference type="InterPro" id="IPR001107">
    <property type="entry name" value="Band_7"/>
</dbReference>
<dbReference type="InterPro" id="IPR036013">
    <property type="entry name" value="Band_7/SPFH_dom_sf"/>
</dbReference>
<dbReference type="InterPro" id="IPR010200">
    <property type="entry name" value="HflC"/>
</dbReference>
<dbReference type="NCBIfam" id="TIGR01932">
    <property type="entry name" value="hflC"/>
    <property type="match status" value="1"/>
</dbReference>
<dbReference type="PANTHER" id="PTHR42911">
    <property type="entry name" value="MODULATOR OF FTSH PROTEASE HFLC"/>
    <property type="match status" value="1"/>
</dbReference>
<dbReference type="PANTHER" id="PTHR42911:SF1">
    <property type="entry name" value="MODULATOR OF FTSH PROTEASE HFLC"/>
    <property type="match status" value="1"/>
</dbReference>
<dbReference type="Pfam" id="PF01145">
    <property type="entry name" value="Band_7"/>
    <property type="match status" value="1"/>
</dbReference>
<dbReference type="PIRSF" id="PIRSF005651">
    <property type="entry name" value="HflC"/>
    <property type="match status" value="1"/>
</dbReference>
<dbReference type="SMART" id="SM00244">
    <property type="entry name" value="PHB"/>
    <property type="match status" value="1"/>
</dbReference>
<dbReference type="SUPFAM" id="SSF117892">
    <property type="entry name" value="Band 7/SPFH domain"/>
    <property type="match status" value="1"/>
</dbReference>
<accession>Q89A40</accession>
<keyword id="KW-0472">Membrane</keyword>
<keyword id="KW-1185">Reference proteome</keyword>
<keyword id="KW-0812">Transmembrane</keyword>
<keyword id="KW-1133">Transmembrane helix</keyword>
<sequence length="326" mass="37976">MRKVILIILIVVVIYFFTCFFIIKEGQRGIILRFGKISYDDNHHVLVYKPGLHIKLPFIESVKIFNSKIQTIDNRLDSVLTKDNKNLVLNTYINWKINDFCRYYLSTGEDNIYYAETLIKQKFNNRLRAQISHLNIKEIIFNVKDQLTSNIKYSLNASSKINYKNVIFKKAINGTSNQNINQENNLLQSISDLSEIGVQILDVRIGKISVSEDFFSLICSRINSEYRAIAKHYRLMGDKQAEELKLRANYEVVKILSKAQRSALIIKSEGEALVAKLFSDAFSQEPEFFSFIRSLQAYENIFKKKNQNLIVVNENNSSFLRYMYIK</sequence>
<organism>
    <name type="scientific">Buchnera aphidicola subsp. Baizongia pistaciae (strain Bp)</name>
    <dbReference type="NCBI Taxonomy" id="224915"/>
    <lineage>
        <taxon>Bacteria</taxon>
        <taxon>Pseudomonadati</taxon>
        <taxon>Pseudomonadota</taxon>
        <taxon>Gammaproteobacteria</taxon>
        <taxon>Enterobacterales</taxon>
        <taxon>Erwiniaceae</taxon>
        <taxon>Buchnera</taxon>
    </lineage>
</organism>
<reference key="1">
    <citation type="journal article" date="2003" name="Proc. Natl. Acad. Sci. U.S.A.">
        <title>Reductive genome evolution in Buchnera aphidicola.</title>
        <authorList>
            <person name="van Ham R.C.H.J."/>
            <person name="Kamerbeek J."/>
            <person name="Palacios C."/>
            <person name="Rausell C."/>
            <person name="Abascal F."/>
            <person name="Bastolla U."/>
            <person name="Fernandez J.M."/>
            <person name="Jimenez L."/>
            <person name="Postigo M."/>
            <person name="Silva F.J."/>
            <person name="Tamames J."/>
            <person name="Viguera E."/>
            <person name="Latorre A."/>
            <person name="Valencia A."/>
            <person name="Moran F."/>
            <person name="Moya A."/>
        </authorList>
    </citation>
    <scope>NUCLEOTIDE SEQUENCE [LARGE SCALE GENOMIC DNA]</scope>
    <source>
        <strain>Bp</strain>
    </source>
</reference>
<feature type="chain" id="PRO_0000094072" description="Protein HflC">
    <location>
        <begin position="1"/>
        <end position="326"/>
    </location>
</feature>
<feature type="transmembrane region" description="Helical" evidence="2">
    <location>
        <begin position="4"/>
        <end position="24"/>
    </location>
</feature>
<proteinExistence type="inferred from homology"/>